<dbReference type="EMBL" id="AB910810">
    <property type="protein sequence ID" value="BAO65578.1"/>
    <property type="molecule type" value="mRNA"/>
</dbReference>
<dbReference type="GO" id="GO:0005576">
    <property type="term" value="C:extracellular region"/>
    <property type="evidence" value="ECO:0007669"/>
    <property type="project" value="UniProtKB-SubCell"/>
</dbReference>
<comment type="function">
    <text evidence="2">Does not show activity on all the human nAChR subtypes studied.</text>
</comment>
<comment type="subcellular location">
    <subcellularLocation>
        <location evidence="5">Secreted</location>
    </subcellularLocation>
</comment>
<comment type="tissue specificity">
    <text evidence="5">Expressed by the venom duct.</text>
</comment>
<comment type="domain">
    <text evidence="4">The cysteine framework is I (CC-C-C). Alpha4/8 pattern.</text>
</comment>
<comment type="miscellaneous">
    <text evidence="2">Both the globular (with C1-C3; C2-C4 disulfide pattern) and ribbon (C1-C4; C2-C3) isomers shows no activity on muscle-type alpha-1-beta-1-delta-epsilon/CHRNA1-CHRNB1-CHRND-CHRNE nAChRs, alpha-3-beta-2/CHRNA3-CHRNB2, alpha-3-beta-4/CHRNA3-CHRNB4, alpha-4-beta-2/CHRNA4-CHRNB2, alpha-7/CHRNA7, and alpha-9-alpha-10/CHRNA9-CHRNA10.</text>
</comment>
<comment type="similarity">
    <text evidence="4">Belongs to the conotoxin A superfamily.</text>
</comment>
<proteinExistence type="inferred from homology"/>
<feature type="signal peptide" evidence="1">
    <location>
        <begin position="1"/>
        <end position="21"/>
    </location>
</feature>
<feature type="propeptide" id="PRO_0000454096" evidence="5">
    <location>
        <begin position="22"/>
        <end position="44"/>
    </location>
</feature>
<feature type="peptide" id="PRO_5004957923" description="Conotoxin G1.9" evidence="5">
    <location>
        <begin position="45"/>
        <end position="68"/>
    </location>
</feature>
<feature type="disulfide bond" evidence="4">
    <location>
        <begin position="46"/>
        <end position="52"/>
    </location>
</feature>
<feature type="disulfide bond" evidence="4">
    <location>
        <begin position="47"/>
        <end position="61"/>
    </location>
</feature>
<protein>
    <recommendedName>
        <fullName evidence="3">Conotoxin G1.9</fullName>
    </recommendedName>
</protein>
<accession>X5IFZ1</accession>
<evidence type="ECO:0000255" key="1"/>
<evidence type="ECO:0000269" key="2">
    <source>
    </source>
</evidence>
<evidence type="ECO:0000303" key="3">
    <source>
    </source>
</evidence>
<evidence type="ECO:0000305" key="4"/>
<evidence type="ECO:0000305" key="5">
    <source>
    </source>
</evidence>
<evidence type="ECO:0000312" key="6">
    <source>
        <dbReference type="EMBL" id="BAO65578.1"/>
    </source>
</evidence>
<name>CAI19_CONGE</name>
<organism>
    <name type="scientific">Conus geographus</name>
    <name type="common">Geography cone</name>
    <name type="synonym">Nubecula geographus</name>
    <dbReference type="NCBI Taxonomy" id="6491"/>
    <lineage>
        <taxon>Eukaryota</taxon>
        <taxon>Metazoa</taxon>
        <taxon>Spiralia</taxon>
        <taxon>Lophotrochozoa</taxon>
        <taxon>Mollusca</taxon>
        <taxon>Gastropoda</taxon>
        <taxon>Caenogastropoda</taxon>
        <taxon>Neogastropoda</taxon>
        <taxon>Conoidea</taxon>
        <taxon>Conidae</taxon>
        <taxon>Conus</taxon>
        <taxon>Gastridium</taxon>
    </lineage>
</organism>
<keyword id="KW-1015">Disulfide bond</keyword>
<keyword id="KW-0964">Secreted</keyword>
<keyword id="KW-0732">Signal</keyword>
<reference evidence="6" key="1">
    <citation type="journal article" date="2014" name="Nat. Commun.">
        <title>Evolution of separate predation- and defence-evoked venoms in carnivorous cone snails.</title>
        <authorList>
            <person name="Dutertre S."/>
            <person name="Jin A.-H."/>
            <person name="Vetter I."/>
            <person name="Hamilton B."/>
            <person name="Sunagar K."/>
            <person name="Lavergne V."/>
            <person name="Dutertre V."/>
            <person name="Fry B.G."/>
            <person name="Antunes A."/>
            <person name="Venter D.J."/>
            <person name="Alewood P.F."/>
            <person name="Lewis R.J."/>
        </authorList>
    </citation>
    <scope>NUCLEOTIDE SEQUENCE [MRNA]</scope>
    <source>
        <tissue>Venom duct</tissue>
    </source>
</reference>
<reference key="2">
    <citation type="journal article" date="2021" name="Biochem. Pharmacol.">
        <title>Globular and ribbon isomers of Conus geographus alpha-conotoxins antagonize human nicotinic acetylcholine receptors.</title>
        <authorList>
            <person name="Tae H.S."/>
            <person name="Gao B."/>
            <person name="Jin A.H."/>
            <person name="Alewood P.F."/>
            <person name="Adams D.J."/>
        </authorList>
    </citation>
    <scope>SYNTHESIS OF 45-68 AS GLOBULAR AND RIBBON ISOMER</scope>
    <scope>FUNCTION</scope>
</reference>
<sequence length="68" mass="7526">MGMRMMFTVFLLVVLATTVVSFTSRRGPKSRRGEPVPTTVINYGECCKDPSCWVKVKDFQCPGASPPN</sequence>